<proteinExistence type="inferred from homology"/>
<name>RL16_STRA1</name>
<comment type="function">
    <text evidence="1">Binds 23S rRNA and is also seen to make contacts with the A and possibly P site tRNAs.</text>
</comment>
<comment type="subunit">
    <text evidence="1">Part of the 50S ribosomal subunit.</text>
</comment>
<comment type="similarity">
    <text evidence="1">Belongs to the universal ribosomal protein uL16 family.</text>
</comment>
<dbReference type="EMBL" id="CP000114">
    <property type="protein sequence ID" value="ABA44751.1"/>
    <property type="molecule type" value="Genomic_DNA"/>
</dbReference>
<dbReference type="RefSeq" id="WP_000960950.1">
    <property type="nucleotide sequence ID" value="NC_007432.1"/>
</dbReference>
<dbReference type="SMR" id="Q3K3W2"/>
<dbReference type="GeneID" id="93793079"/>
<dbReference type="KEGG" id="sak:SAK_0098"/>
<dbReference type="HOGENOM" id="CLU_078858_2_1_9"/>
<dbReference type="GO" id="GO:0022625">
    <property type="term" value="C:cytosolic large ribosomal subunit"/>
    <property type="evidence" value="ECO:0007669"/>
    <property type="project" value="TreeGrafter"/>
</dbReference>
<dbReference type="GO" id="GO:0019843">
    <property type="term" value="F:rRNA binding"/>
    <property type="evidence" value="ECO:0007669"/>
    <property type="project" value="UniProtKB-UniRule"/>
</dbReference>
<dbReference type="GO" id="GO:0003735">
    <property type="term" value="F:structural constituent of ribosome"/>
    <property type="evidence" value="ECO:0007669"/>
    <property type="project" value="InterPro"/>
</dbReference>
<dbReference type="GO" id="GO:0000049">
    <property type="term" value="F:tRNA binding"/>
    <property type="evidence" value="ECO:0007669"/>
    <property type="project" value="UniProtKB-KW"/>
</dbReference>
<dbReference type="GO" id="GO:0006412">
    <property type="term" value="P:translation"/>
    <property type="evidence" value="ECO:0007669"/>
    <property type="project" value="UniProtKB-UniRule"/>
</dbReference>
<dbReference type="CDD" id="cd01433">
    <property type="entry name" value="Ribosomal_L16_L10e"/>
    <property type="match status" value="1"/>
</dbReference>
<dbReference type="FunFam" id="3.90.1170.10:FF:000001">
    <property type="entry name" value="50S ribosomal protein L16"/>
    <property type="match status" value="1"/>
</dbReference>
<dbReference type="Gene3D" id="3.90.1170.10">
    <property type="entry name" value="Ribosomal protein L10e/L16"/>
    <property type="match status" value="1"/>
</dbReference>
<dbReference type="HAMAP" id="MF_01342">
    <property type="entry name" value="Ribosomal_uL16"/>
    <property type="match status" value="1"/>
</dbReference>
<dbReference type="InterPro" id="IPR047873">
    <property type="entry name" value="Ribosomal_uL16"/>
</dbReference>
<dbReference type="InterPro" id="IPR000114">
    <property type="entry name" value="Ribosomal_uL16_bact-type"/>
</dbReference>
<dbReference type="InterPro" id="IPR020798">
    <property type="entry name" value="Ribosomal_uL16_CS"/>
</dbReference>
<dbReference type="InterPro" id="IPR016180">
    <property type="entry name" value="Ribosomal_uL16_dom"/>
</dbReference>
<dbReference type="InterPro" id="IPR036920">
    <property type="entry name" value="Ribosomal_uL16_sf"/>
</dbReference>
<dbReference type="NCBIfam" id="TIGR01164">
    <property type="entry name" value="rplP_bact"/>
    <property type="match status" value="1"/>
</dbReference>
<dbReference type="PANTHER" id="PTHR12220">
    <property type="entry name" value="50S/60S RIBOSOMAL PROTEIN L16"/>
    <property type="match status" value="1"/>
</dbReference>
<dbReference type="PANTHER" id="PTHR12220:SF13">
    <property type="entry name" value="LARGE RIBOSOMAL SUBUNIT PROTEIN UL16M"/>
    <property type="match status" value="1"/>
</dbReference>
<dbReference type="Pfam" id="PF00252">
    <property type="entry name" value="Ribosomal_L16"/>
    <property type="match status" value="1"/>
</dbReference>
<dbReference type="PRINTS" id="PR00060">
    <property type="entry name" value="RIBOSOMALL16"/>
</dbReference>
<dbReference type="SUPFAM" id="SSF54686">
    <property type="entry name" value="Ribosomal protein L16p/L10e"/>
    <property type="match status" value="1"/>
</dbReference>
<dbReference type="PROSITE" id="PS00586">
    <property type="entry name" value="RIBOSOMAL_L16_1"/>
    <property type="match status" value="1"/>
</dbReference>
<dbReference type="PROSITE" id="PS00701">
    <property type="entry name" value="RIBOSOMAL_L16_2"/>
    <property type="match status" value="1"/>
</dbReference>
<sequence>MLVPKRVKHRREFRGKMRGEAKGGKEVSFGEYGLQATTSHWITNRQIEAARIAMTRYMKRGGKVWIKIFPHKSYTAKAIGVRMGSGKGAPEGWVAPVKRGKVMFEIAGVSEEVAREALRLASHKLPVKCKFVKREAE</sequence>
<accession>Q3K3W2</accession>
<reference key="1">
    <citation type="journal article" date="2005" name="Proc. Natl. Acad. Sci. U.S.A.">
        <title>Genome analysis of multiple pathogenic isolates of Streptococcus agalactiae: implications for the microbial 'pan-genome'.</title>
        <authorList>
            <person name="Tettelin H."/>
            <person name="Masignani V."/>
            <person name="Cieslewicz M.J."/>
            <person name="Donati C."/>
            <person name="Medini D."/>
            <person name="Ward N.L."/>
            <person name="Angiuoli S.V."/>
            <person name="Crabtree J."/>
            <person name="Jones A.L."/>
            <person name="Durkin A.S."/>
            <person name="DeBoy R.T."/>
            <person name="Davidsen T.M."/>
            <person name="Mora M."/>
            <person name="Scarselli M."/>
            <person name="Margarit y Ros I."/>
            <person name="Peterson J.D."/>
            <person name="Hauser C.R."/>
            <person name="Sundaram J.P."/>
            <person name="Nelson W.C."/>
            <person name="Madupu R."/>
            <person name="Brinkac L.M."/>
            <person name="Dodson R.J."/>
            <person name="Rosovitz M.J."/>
            <person name="Sullivan S.A."/>
            <person name="Daugherty S.C."/>
            <person name="Haft D.H."/>
            <person name="Selengut J."/>
            <person name="Gwinn M.L."/>
            <person name="Zhou L."/>
            <person name="Zafar N."/>
            <person name="Khouri H."/>
            <person name="Radune D."/>
            <person name="Dimitrov G."/>
            <person name="Watkins K."/>
            <person name="O'Connor K.J."/>
            <person name="Smith S."/>
            <person name="Utterback T.R."/>
            <person name="White O."/>
            <person name="Rubens C.E."/>
            <person name="Grandi G."/>
            <person name="Madoff L.C."/>
            <person name="Kasper D.L."/>
            <person name="Telford J.L."/>
            <person name="Wessels M.R."/>
            <person name="Rappuoli R."/>
            <person name="Fraser C.M."/>
        </authorList>
    </citation>
    <scope>NUCLEOTIDE SEQUENCE [LARGE SCALE GENOMIC DNA]</scope>
    <source>
        <strain>ATCC 27591 / A909 / CDC SS700</strain>
    </source>
</reference>
<feature type="chain" id="PRO_0000062213" description="Large ribosomal subunit protein uL16">
    <location>
        <begin position="1"/>
        <end position="137"/>
    </location>
</feature>
<gene>
    <name evidence="1" type="primary">rplP</name>
    <name type="ordered locus">SAK_0098</name>
</gene>
<keyword id="KW-0687">Ribonucleoprotein</keyword>
<keyword id="KW-0689">Ribosomal protein</keyword>
<keyword id="KW-0694">RNA-binding</keyword>
<keyword id="KW-0699">rRNA-binding</keyword>
<keyword id="KW-0820">tRNA-binding</keyword>
<evidence type="ECO:0000255" key="1">
    <source>
        <dbReference type="HAMAP-Rule" id="MF_01342"/>
    </source>
</evidence>
<evidence type="ECO:0000305" key="2"/>
<organism>
    <name type="scientific">Streptococcus agalactiae serotype Ia (strain ATCC 27591 / A909 / CDC SS700)</name>
    <dbReference type="NCBI Taxonomy" id="205921"/>
    <lineage>
        <taxon>Bacteria</taxon>
        <taxon>Bacillati</taxon>
        <taxon>Bacillota</taxon>
        <taxon>Bacilli</taxon>
        <taxon>Lactobacillales</taxon>
        <taxon>Streptococcaceae</taxon>
        <taxon>Streptococcus</taxon>
    </lineage>
</organism>
<protein>
    <recommendedName>
        <fullName evidence="1">Large ribosomal subunit protein uL16</fullName>
    </recommendedName>
    <alternativeName>
        <fullName evidence="2">50S ribosomal protein L16</fullName>
    </alternativeName>
</protein>